<feature type="chain" id="PRO_1000100852" description="Soluble pyridine nucleotide transhydrogenase">
    <location>
        <begin position="1"/>
        <end position="466"/>
    </location>
</feature>
<feature type="binding site" evidence="1">
    <location>
        <begin position="36"/>
        <end position="45"/>
    </location>
    <ligand>
        <name>FAD</name>
        <dbReference type="ChEBI" id="CHEBI:57692"/>
    </ligand>
</feature>
<evidence type="ECO:0000255" key="1">
    <source>
        <dbReference type="HAMAP-Rule" id="MF_00247"/>
    </source>
</evidence>
<reference key="1">
    <citation type="journal article" date="2011" name="Proc. Natl. Acad. Sci. U.S.A.">
        <title>Genomic anatomy of Escherichia coli O157:H7 outbreaks.</title>
        <authorList>
            <person name="Eppinger M."/>
            <person name="Mammel M.K."/>
            <person name="Leclerc J.E."/>
            <person name="Ravel J."/>
            <person name="Cebula T.A."/>
        </authorList>
    </citation>
    <scope>NUCLEOTIDE SEQUENCE [LARGE SCALE GENOMIC DNA]</scope>
    <source>
        <strain>EC4115 / EHEC</strain>
    </source>
</reference>
<dbReference type="EC" id="1.6.1.1" evidence="1"/>
<dbReference type="EMBL" id="CP001164">
    <property type="protein sequence ID" value="ACI39114.1"/>
    <property type="molecule type" value="Genomic_DNA"/>
</dbReference>
<dbReference type="RefSeq" id="WP_001120810.1">
    <property type="nucleotide sequence ID" value="NC_011353.1"/>
</dbReference>
<dbReference type="SMR" id="B5Z064"/>
<dbReference type="GeneID" id="75203206"/>
<dbReference type="KEGG" id="ecf:ECH74115_5422"/>
<dbReference type="HOGENOM" id="CLU_016755_0_0_6"/>
<dbReference type="GO" id="GO:0005829">
    <property type="term" value="C:cytosol"/>
    <property type="evidence" value="ECO:0007669"/>
    <property type="project" value="TreeGrafter"/>
</dbReference>
<dbReference type="GO" id="GO:0004148">
    <property type="term" value="F:dihydrolipoyl dehydrogenase (NADH) activity"/>
    <property type="evidence" value="ECO:0007669"/>
    <property type="project" value="TreeGrafter"/>
</dbReference>
<dbReference type="GO" id="GO:0050660">
    <property type="term" value="F:flavin adenine dinucleotide binding"/>
    <property type="evidence" value="ECO:0007669"/>
    <property type="project" value="TreeGrafter"/>
</dbReference>
<dbReference type="GO" id="GO:0003957">
    <property type="term" value="F:NAD(P)+ transhydrogenase (Si-specific) activity"/>
    <property type="evidence" value="ECO:0007669"/>
    <property type="project" value="UniProtKB-UniRule"/>
</dbReference>
<dbReference type="GO" id="GO:0006103">
    <property type="term" value="P:2-oxoglutarate metabolic process"/>
    <property type="evidence" value="ECO:0007669"/>
    <property type="project" value="TreeGrafter"/>
</dbReference>
<dbReference type="GO" id="GO:0006739">
    <property type="term" value="P:NADP metabolic process"/>
    <property type="evidence" value="ECO:0007669"/>
    <property type="project" value="UniProtKB-UniRule"/>
</dbReference>
<dbReference type="FunFam" id="3.30.390.30:FF:000002">
    <property type="entry name" value="Soluble pyridine nucleotide transhydrogenase"/>
    <property type="match status" value="1"/>
</dbReference>
<dbReference type="FunFam" id="3.50.50.60:FF:000008">
    <property type="entry name" value="Soluble pyridine nucleotide transhydrogenase"/>
    <property type="match status" value="1"/>
</dbReference>
<dbReference type="Gene3D" id="3.30.390.30">
    <property type="match status" value="1"/>
</dbReference>
<dbReference type="Gene3D" id="3.50.50.60">
    <property type="entry name" value="FAD/NAD(P)-binding domain"/>
    <property type="match status" value="2"/>
</dbReference>
<dbReference type="HAMAP" id="MF_00247">
    <property type="entry name" value="SthA"/>
    <property type="match status" value="1"/>
</dbReference>
<dbReference type="InterPro" id="IPR050151">
    <property type="entry name" value="Class-I_Pyr_Nuc-Dis_Oxidored"/>
</dbReference>
<dbReference type="InterPro" id="IPR036188">
    <property type="entry name" value="FAD/NAD-bd_sf"/>
</dbReference>
<dbReference type="InterPro" id="IPR023753">
    <property type="entry name" value="FAD/NAD-binding_dom"/>
</dbReference>
<dbReference type="InterPro" id="IPR016156">
    <property type="entry name" value="FAD/NAD-linked_Rdtase_dimer_sf"/>
</dbReference>
<dbReference type="InterPro" id="IPR001100">
    <property type="entry name" value="Pyr_nuc-diS_OxRdtase"/>
</dbReference>
<dbReference type="InterPro" id="IPR004099">
    <property type="entry name" value="Pyr_nucl-diS_OxRdtase_dimer"/>
</dbReference>
<dbReference type="InterPro" id="IPR022962">
    <property type="entry name" value="STH_gammaproteobact"/>
</dbReference>
<dbReference type="NCBIfam" id="NF003585">
    <property type="entry name" value="PRK05249.1"/>
    <property type="match status" value="1"/>
</dbReference>
<dbReference type="PANTHER" id="PTHR22912">
    <property type="entry name" value="DISULFIDE OXIDOREDUCTASE"/>
    <property type="match status" value="1"/>
</dbReference>
<dbReference type="PANTHER" id="PTHR22912:SF93">
    <property type="entry name" value="SOLUBLE PYRIDINE NUCLEOTIDE TRANSHYDROGENASE"/>
    <property type="match status" value="1"/>
</dbReference>
<dbReference type="Pfam" id="PF07992">
    <property type="entry name" value="Pyr_redox_2"/>
    <property type="match status" value="1"/>
</dbReference>
<dbReference type="Pfam" id="PF02852">
    <property type="entry name" value="Pyr_redox_dim"/>
    <property type="match status" value="1"/>
</dbReference>
<dbReference type="PIRSF" id="PIRSF000350">
    <property type="entry name" value="Mercury_reductase_MerA"/>
    <property type="match status" value="1"/>
</dbReference>
<dbReference type="PRINTS" id="PR00368">
    <property type="entry name" value="FADPNR"/>
</dbReference>
<dbReference type="PRINTS" id="PR00411">
    <property type="entry name" value="PNDRDTASEI"/>
</dbReference>
<dbReference type="SUPFAM" id="SSF51905">
    <property type="entry name" value="FAD/NAD(P)-binding domain"/>
    <property type="match status" value="1"/>
</dbReference>
<dbReference type="SUPFAM" id="SSF55424">
    <property type="entry name" value="FAD/NAD-linked reductases, dimerisation (C-terminal) domain"/>
    <property type="match status" value="1"/>
</dbReference>
<keyword id="KW-0963">Cytoplasm</keyword>
<keyword id="KW-0274">FAD</keyword>
<keyword id="KW-0285">Flavoprotein</keyword>
<keyword id="KW-0520">NAD</keyword>
<keyword id="KW-0521">NADP</keyword>
<keyword id="KW-0560">Oxidoreductase</keyword>
<protein>
    <recommendedName>
        <fullName evidence="1">Soluble pyridine nucleotide transhydrogenase</fullName>
        <shortName evidence="1">STH</shortName>
        <ecNumber evidence="1">1.6.1.1</ecNumber>
    </recommendedName>
    <alternativeName>
        <fullName evidence="1">NAD(P)(+) transhydrogenase [B-specific]</fullName>
    </alternativeName>
</protein>
<proteinExistence type="inferred from homology"/>
<name>STHA_ECO5E</name>
<sequence length="466" mass="51560">MPHSYDYDAIVIGSGPGGEGAAMGLVKQGARVAVIERYQNVGGGCTHWGTIPSKALRHAVSRIIEFNQNPLYSDHSRLLRSSFADILNHADNVINQQTRMRQGFYERNHCEILQGNARFVDEHTLALDCPDGSVETLTAEKFVIACGSRPYHPTDVDFTHPRIYDSDSILSMHHEPRHVLIYGAGVIGCEYASIFRGMDVKVDLINTRDRLLAFLDQEMSDSLSYHFWNSGVVIRHNEEYEKIEGCDDGVIMHLKSGKKLKADCLLYANGRTGNTDSLALQNIGLETDSRGQLKVNSMYQTAQPHVYAVGDVIGYPSLASAAYDQGRIAAQALVKGEATAHLIEDIPTGIYTIPEISSVGKTEQQLTAMKVPYEVGRAQFKHLARAQIVGMNVGTLKILFHRETKEILGIHCFGERAAEIIHIGQAIMEQKGGGNTIEYFVNTTFNYPTMAEAYRVAALNGLNRLF</sequence>
<accession>B5Z064</accession>
<gene>
    <name evidence="1" type="primary">sthA</name>
    <name evidence="1" type="synonym">udhA</name>
    <name type="ordered locus">ECH74115_5422</name>
</gene>
<comment type="function">
    <text evidence="1">Conversion of NADPH, generated by peripheral catabolic pathways, to NADH, which can enter the respiratory chain for energy generation.</text>
</comment>
<comment type="catalytic activity">
    <reaction evidence="1">
        <text>NAD(+) + NADPH = NADH + NADP(+)</text>
        <dbReference type="Rhea" id="RHEA:11692"/>
        <dbReference type="ChEBI" id="CHEBI:57540"/>
        <dbReference type="ChEBI" id="CHEBI:57783"/>
        <dbReference type="ChEBI" id="CHEBI:57945"/>
        <dbReference type="ChEBI" id="CHEBI:58349"/>
        <dbReference type="EC" id="1.6.1.1"/>
    </reaction>
</comment>
<comment type="cofactor">
    <cofactor evidence="1">
        <name>FAD</name>
        <dbReference type="ChEBI" id="CHEBI:57692"/>
    </cofactor>
    <text evidence="1">Binds 1 FAD per subunit.</text>
</comment>
<comment type="subcellular location">
    <subcellularLocation>
        <location evidence="1">Cytoplasm</location>
    </subcellularLocation>
</comment>
<comment type="similarity">
    <text evidence="1">Belongs to the class-I pyridine nucleotide-disulfide oxidoreductase family.</text>
</comment>
<organism>
    <name type="scientific">Escherichia coli O157:H7 (strain EC4115 / EHEC)</name>
    <dbReference type="NCBI Taxonomy" id="444450"/>
    <lineage>
        <taxon>Bacteria</taxon>
        <taxon>Pseudomonadati</taxon>
        <taxon>Pseudomonadota</taxon>
        <taxon>Gammaproteobacteria</taxon>
        <taxon>Enterobacterales</taxon>
        <taxon>Enterobacteriaceae</taxon>
        <taxon>Escherichia</taxon>
    </lineage>
</organism>